<protein>
    <recommendedName>
        <fullName evidence="2">NADH-quinone oxidoreductase subunit B 1</fullName>
        <ecNumber evidence="2">7.1.1.-</ecNumber>
    </recommendedName>
    <alternativeName>
        <fullName evidence="2">NADH dehydrogenase I subunit B 1</fullName>
    </alternativeName>
    <alternativeName>
        <fullName evidence="2">NDH-1 subunit B 1</fullName>
    </alternativeName>
</protein>
<dbReference type="EC" id="7.1.1.-" evidence="2"/>
<dbReference type="EMBL" id="CP000548">
    <property type="protein sequence ID" value="ABO06590.1"/>
    <property type="molecule type" value="Genomic_DNA"/>
</dbReference>
<dbReference type="RefSeq" id="WP_004186402.1">
    <property type="nucleotide sequence ID" value="NZ_CP007802.1"/>
</dbReference>
<dbReference type="SMR" id="A3MIA2"/>
<dbReference type="KEGG" id="bmaz:BM44_2597"/>
<dbReference type="KEGG" id="bmn:BMA10247_0414"/>
<dbReference type="PATRIC" id="fig|320389.8.peg.2931"/>
<dbReference type="GO" id="GO:0005886">
    <property type="term" value="C:plasma membrane"/>
    <property type="evidence" value="ECO:0007669"/>
    <property type="project" value="UniProtKB-SubCell"/>
</dbReference>
<dbReference type="GO" id="GO:0045271">
    <property type="term" value="C:respiratory chain complex I"/>
    <property type="evidence" value="ECO:0007669"/>
    <property type="project" value="TreeGrafter"/>
</dbReference>
<dbReference type="GO" id="GO:0051539">
    <property type="term" value="F:4 iron, 4 sulfur cluster binding"/>
    <property type="evidence" value="ECO:0007669"/>
    <property type="project" value="UniProtKB-KW"/>
</dbReference>
<dbReference type="GO" id="GO:0005506">
    <property type="term" value="F:iron ion binding"/>
    <property type="evidence" value="ECO:0007669"/>
    <property type="project" value="UniProtKB-UniRule"/>
</dbReference>
<dbReference type="GO" id="GO:0008137">
    <property type="term" value="F:NADH dehydrogenase (ubiquinone) activity"/>
    <property type="evidence" value="ECO:0007669"/>
    <property type="project" value="InterPro"/>
</dbReference>
<dbReference type="GO" id="GO:0050136">
    <property type="term" value="F:NADH:ubiquinone reductase (non-electrogenic) activity"/>
    <property type="evidence" value="ECO:0007669"/>
    <property type="project" value="UniProtKB-UniRule"/>
</dbReference>
<dbReference type="GO" id="GO:0048038">
    <property type="term" value="F:quinone binding"/>
    <property type="evidence" value="ECO:0007669"/>
    <property type="project" value="UniProtKB-KW"/>
</dbReference>
<dbReference type="GO" id="GO:0009060">
    <property type="term" value="P:aerobic respiration"/>
    <property type="evidence" value="ECO:0007669"/>
    <property type="project" value="TreeGrafter"/>
</dbReference>
<dbReference type="GO" id="GO:0015990">
    <property type="term" value="P:electron transport coupled proton transport"/>
    <property type="evidence" value="ECO:0007669"/>
    <property type="project" value="TreeGrafter"/>
</dbReference>
<dbReference type="FunFam" id="3.40.50.12280:FF:000001">
    <property type="entry name" value="NADH-quinone oxidoreductase subunit B 2"/>
    <property type="match status" value="1"/>
</dbReference>
<dbReference type="Gene3D" id="3.40.50.12280">
    <property type="match status" value="1"/>
</dbReference>
<dbReference type="HAMAP" id="MF_01356">
    <property type="entry name" value="NDH1_NuoB"/>
    <property type="match status" value="1"/>
</dbReference>
<dbReference type="InterPro" id="IPR006137">
    <property type="entry name" value="NADH_UbQ_OxRdtase-like_20kDa"/>
</dbReference>
<dbReference type="InterPro" id="IPR006138">
    <property type="entry name" value="NADH_UQ_OxRdtase_20Kd_su"/>
</dbReference>
<dbReference type="NCBIfam" id="TIGR01957">
    <property type="entry name" value="nuoB_fam"/>
    <property type="match status" value="1"/>
</dbReference>
<dbReference type="NCBIfam" id="NF005012">
    <property type="entry name" value="PRK06411.1"/>
    <property type="match status" value="1"/>
</dbReference>
<dbReference type="PANTHER" id="PTHR11995">
    <property type="entry name" value="NADH DEHYDROGENASE"/>
    <property type="match status" value="1"/>
</dbReference>
<dbReference type="PANTHER" id="PTHR11995:SF14">
    <property type="entry name" value="NADH DEHYDROGENASE [UBIQUINONE] IRON-SULFUR PROTEIN 7, MITOCHONDRIAL"/>
    <property type="match status" value="1"/>
</dbReference>
<dbReference type="Pfam" id="PF01058">
    <property type="entry name" value="Oxidored_q6"/>
    <property type="match status" value="1"/>
</dbReference>
<dbReference type="SUPFAM" id="SSF56770">
    <property type="entry name" value="HydA/Nqo6-like"/>
    <property type="match status" value="1"/>
</dbReference>
<dbReference type="PROSITE" id="PS01150">
    <property type="entry name" value="COMPLEX1_20K"/>
    <property type="match status" value="1"/>
</dbReference>
<name>NUOB1_BURM7</name>
<organism>
    <name type="scientific">Burkholderia mallei (strain NCTC 10247)</name>
    <dbReference type="NCBI Taxonomy" id="320389"/>
    <lineage>
        <taxon>Bacteria</taxon>
        <taxon>Pseudomonadati</taxon>
        <taxon>Pseudomonadota</taxon>
        <taxon>Betaproteobacteria</taxon>
        <taxon>Burkholderiales</taxon>
        <taxon>Burkholderiaceae</taxon>
        <taxon>Burkholderia</taxon>
        <taxon>pseudomallei group</taxon>
    </lineage>
</organism>
<feature type="chain" id="PRO_0000358373" description="NADH-quinone oxidoreductase subunit B 1">
    <location>
        <begin position="1"/>
        <end position="159"/>
    </location>
</feature>
<feature type="binding site" evidence="2">
    <location>
        <position position="37"/>
    </location>
    <ligand>
        <name>[4Fe-4S] cluster</name>
        <dbReference type="ChEBI" id="CHEBI:49883"/>
    </ligand>
</feature>
<feature type="binding site" evidence="2">
    <location>
        <position position="38"/>
    </location>
    <ligand>
        <name>[4Fe-4S] cluster</name>
        <dbReference type="ChEBI" id="CHEBI:49883"/>
    </ligand>
</feature>
<feature type="binding site" evidence="2">
    <location>
        <position position="102"/>
    </location>
    <ligand>
        <name>[4Fe-4S] cluster</name>
        <dbReference type="ChEBI" id="CHEBI:49883"/>
    </ligand>
</feature>
<feature type="binding site" evidence="2">
    <location>
        <position position="132"/>
    </location>
    <ligand>
        <name>[4Fe-4S] cluster</name>
        <dbReference type="ChEBI" id="CHEBI:49883"/>
    </ligand>
</feature>
<proteinExistence type="inferred from homology"/>
<gene>
    <name evidence="2" type="primary">nuoB1</name>
    <name type="ordered locus">BMA10247_0414</name>
</gene>
<accession>A3MIA2</accession>
<comment type="function">
    <text evidence="1">NDH-1 shuttles electrons from NADH, via FMN and iron-sulfur (Fe-S) centers, to quinones in the respiratory chain. Couples the redox reaction to proton translocation (for every two electrons transferred, four hydrogen ions are translocated across the cytoplasmic membrane), and thus conserves the redox energy in a proton gradient (By similarity).</text>
</comment>
<comment type="catalytic activity">
    <reaction evidence="2">
        <text>a quinone + NADH + 5 H(+)(in) = a quinol + NAD(+) + 4 H(+)(out)</text>
        <dbReference type="Rhea" id="RHEA:57888"/>
        <dbReference type="ChEBI" id="CHEBI:15378"/>
        <dbReference type="ChEBI" id="CHEBI:24646"/>
        <dbReference type="ChEBI" id="CHEBI:57540"/>
        <dbReference type="ChEBI" id="CHEBI:57945"/>
        <dbReference type="ChEBI" id="CHEBI:132124"/>
    </reaction>
</comment>
<comment type="cofactor">
    <cofactor evidence="2">
        <name>[4Fe-4S] cluster</name>
        <dbReference type="ChEBI" id="CHEBI:49883"/>
    </cofactor>
    <text evidence="2">Binds 1 [4Fe-4S] cluster.</text>
</comment>
<comment type="subunit">
    <text evidence="2">NDH-1 is composed of 14 different subunits. Subunits NuoB, C, D, E, F, and G constitute the peripheral sector of the complex.</text>
</comment>
<comment type="subcellular location">
    <subcellularLocation>
        <location evidence="2">Cell inner membrane</location>
        <topology evidence="2">Peripheral membrane protein</topology>
        <orientation evidence="2">Cytoplasmic side</orientation>
    </subcellularLocation>
</comment>
<comment type="similarity">
    <text evidence="2">Belongs to the complex I 20 kDa subunit family.</text>
</comment>
<sequence>MSIEGVLKEGFVTTTADKLINWTRTGSLWPMTFGLACCAVEMMHAGAARYDLDRFGVVFRPSPRQSDVMIVAGTLCNKMAPALRRVYDQMAEPRWVISMGSCANGGGYYHYSYSVVRGCDRIVPVDVYVPGCPPTAEALVYGVIQLQAKIRRTSTIARQ</sequence>
<reference key="1">
    <citation type="journal article" date="2010" name="Genome Biol. Evol.">
        <title>Continuing evolution of Burkholderia mallei through genome reduction and large-scale rearrangements.</title>
        <authorList>
            <person name="Losada L."/>
            <person name="Ronning C.M."/>
            <person name="DeShazer D."/>
            <person name="Woods D."/>
            <person name="Fedorova N."/>
            <person name="Kim H.S."/>
            <person name="Shabalina S.A."/>
            <person name="Pearson T.R."/>
            <person name="Brinkac L."/>
            <person name="Tan P."/>
            <person name="Nandi T."/>
            <person name="Crabtree J."/>
            <person name="Badger J."/>
            <person name="Beckstrom-Sternberg S."/>
            <person name="Saqib M."/>
            <person name="Schutzer S.E."/>
            <person name="Keim P."/>
            <person name="Nierman W.C."/>
        </authorList>
    </citation>
    <scope>NUCLEOTIDE SEQUENCE [LARGE SCALE GENOMIC DNA]</scope>
    <source>
        <strain>NCTC 10247</strain>
    </source>
</reference>
<evidence type="ECO:0000250" key="1"/>
<evidence type="ECO:0000255" key="2">
    <source>
        <dbReference type="HAMAP-Rule" id="MF_01356"/>
    </source>
</evidence>
<keyword id="KW-0004">4Fe-4S</keyword>
<keyword id="KW-0997">Cell inner membrane</keyword>
<keyword id="KW-1003">Cell membrane</keyword>
<keyword id="KW-0408">Iron</keyword>
<keyword id="KW-0411">Iron-sulfur</keyword>
<keyword id="KW-0472">Membrane</keyword>
<keyword id="KW-0479">Metal-binding</keyword>
<keyword id="KW-0520">NAD</keyword>
<keyword id="KW-0874">Quinone</keyword>
<keyword id="KW-1278">Translocase</keyword>
<keyword id="KW-0813">Transport</keyword>
<keyword id="KW-0830">Ubiquinone</keyword>